<name>EFTU1_ALBFT</name>
<dbReference type="EC" id="3.6.5.3" evidence="2"/>
<dbReference type="EMBL" id="CP000267">
    <property type="protein sequence ID" value="ABD71303.1"/>
    <property type="molecule type" value="Genomic_DNA"/>
</dbReference>
<dbReference type="RefSeq" id="WP_011465866.1">
    <property type="nucleotide sequence ID" value="NC_007908.1"/>
</dbReference>
<dbReference type="SMR" id="Q21SF0"/>
<dbReference type="STRING" id="338969.Rfer_3599"/>
<dbReference type="KEGG" id="rfr:Rfer_3599"/>
<dbReference type="eggNOG" id="COG0050">
    <property type="taxonomic scope" value="Bacteria"/>
</dbReference>
<dbReference type="HOGENOM" id="CLU_007265_0_2_4"/>
<dbReference type="OrthoDB" id="9803139at2"/>
<dbReference type="Proteomes" id="UP000008332">
    <property type="component" value="Chromosome"/>
</dbReference>
<dbReference type="GO" id="GO:0005829">
    <property type="term" value="C:cytosol"/>
    <property type="evidence" value="ECO:0007669"/>
    <property type="project" value="TreeGrafter"/>
</dbReference>
<dbReference type="GO" id="GO:0005525">
    <property type="term" value="F:GTP binding"/>
    <property type="evidence" value="ECO:0007669"/>
    <property type="project" value="UniProtKB-UniRule"/>
</dbReference>
<dbReference type="GO" id="GO:0003924">
    <property type="term" value="F:GTPase activity"/>
    <property type="evidence" value="ECO:0007669"/>
    <property type="project" value="InterPro"/>
</dbReference>
<dbReference type="GO" id="GO:0097216">
    <property type="term" value="F:guanosine tetraphosphate binding"/>
    <property type="evidence" value="ECO:0007669"/>
    <property type="project" value="UniProtKB-ARBA"/>
</dbReference>
<dbReference type="GO" id="GO:0003746">
    <property type="term" value="F:translation elongation factor activity"/>
    <property type="evidence" value="ECO:0007669"/>
    <property type="project" value="UniProtKB-UniRule"/>
</dbReference>
<dbReference type="CDD" id="cd01884">
    <property type="entry name" value="EF_Tu"/>
    <property type="match status" value="1"/>
</dbReference>
<dbReference type="CDD" id="cd03697">
    <property type="entry name" value="EFTU_II"/>
    <property type="match status" value="1"/>
</dbReference>
<dbReference type="CDD" id="cd03707">
    <property type="entry name" value="EFTU_III"/>
    <property type="match status" value="1"/>
</dbReference>
<dbReference type="FunFam" id="2.40.30.10:FF:000001">
    <property type="entry name" value="Elongation factor Tu"/>
    <property type="match status" value="1"/>
</dbReference>
<dbReference type="FunFam" id="3.40.50.300:FF:000003">
    <property type="entry name" value="Elongation factor Tu"/>
    <property type="match status" value="1"/>
</dbReference>
<dbReference type="Gene3D" id="3.40.50.300">
    <property type="entry name" value="P-loop containing nucleotide triphosphate hydrolases"/>
    <property type="match status" value="1"/>
</dbReference>
<dbReference type="Gene3D" id="2.40.30.10">
    <property type="entry name" value="Translation factors"/>
    <property type="match status" value="2"/>
</dbReference>
<dbReference type="HAMAP" id="MF_00118_B">
    <property type="entry name" value="EF_Tu_B"/>
    <property type="match status" value="1"/>
</dbReference>
<dbReference type="InterPro" id="IPR041709">
    <property type="entry name" value="EF-Tu_GTP-bd"/>
</dbReference>
<dbReference type="InterPro" id="IPR050055">
    <property type="entry name" value="EF-Tu_GTPase"/>
</dbReference>
<dbReference type="InterPro" id="IPR004161">
    <property type="entry name" value="EFTu-like_2"/>
</dbReference>
<dbReference type="InterPro" id="IPR033720">
    <property type="entry name" value="EFTU_2"/>
</dbReference>
<dbReference type="InterPro" id="IPR031157">
    <property type="entry name" value="G_TR_CS"/>
</dbReference>
<dbReference type="InterPro" id="IPR027417">
    <property type="entry name" value="P-loop_NTPase"/>
</dbReference>
<dbReference type="InterPro" id="IPR005225">
    <property type="entry name" value="Small_GTP-bd"/>
</dbReference>
<dbReference type="InterPro" id="IPR000795">
    <property type="entry name" value="T_Tr_GTP-bd_dom"/>
</dbReference>
<dbReference type="InterPro" id="IPR009000">
    <property type="entry name" value="Transl_B-barrel_sf"/>
</dbReference>
<dbReference type="InterPro" id="IPR009001">
    <property type="entry name" value="Transl_elong_EF1A/Init_IF2_C"/>
</dbReference>
<dbReference type="InterPro" id="IPR004541">
    <property type="entry name" value="Transl_elong_EFTu/EF1A_bac/org"/>
</dbReference>
<dbReference type="InterPro" id="IPR004160">
    <property type="entry name" value="Transl_elong_EFTu/EF1A_C"/>
</dbReference>
<dbReference type="NCBIfam" id="TIGR00485">
    <property type="entry name" value="EF-Tu"/>
    <property type="match status" value="1"/>
</dbReference>
<dbReference type="NCBIfam" id="NF000766">
    <property type="entry name" value="PRK00049.1"/>
    <property type="match status" value="1"/>
</dbReference>
<dbReference type="NCBIfam" id="NF009372">
    <property type="entry name" value="PRK12735.1"/>
    <property type="match status" value="1"/>
</dbReference>
<dbReference type="NCBIfam" id="NF009373">
    <property type="entry name" value="PRK12736.1"/>
    <property type="match status" value="1"/>
</dbReference>
<dbReference type="NCBIfam" id="TIGR00231">
    <property type="entry name" value="small_GTP"/>
    <property type="match status" value="1"/>
</dbReference>
<dbReference type="PANTHER" id="PTHR43721:SF22">
    <property type="entry name" value="ELONGATION FACTOR TU, MITOCHONDRIAL"/>
    <property type="match status" value="1"/>
</dbReference>
<dbReference type="PANTHER" id="PTHR43721">
    <property type="entry name" value="ELONGATION FACTOR TU-RELATED"/>
    <property type="match status" value="1"/>
</dbReference>
<dbReference type="Pfam" id="PF00009">
    <property type="entry name" value="GTP_EFTU"/>
    <property type="match status" value="1"/>
</dbReference>
<dbReference type="Pfam" id="PF03144">
    <property type="entry name" value="GTP_EFTU_D2"/>
    <property type="match status" value="1"/>
</dbReference>
<dbReference type="Pfam" id="PF03143">
    <property type="entry name" value="GTP_EFTU_D3"/>
    <property type="match status" value="1"/>
</dbReference>
<dbReference type="PRINTS" id="PR00315">
    <property type="entry name" value="ELONGATNFCT"/>
</dbReference>
<dbReference type="SUPFAM" id="SSF50465">
    <property type="entry name" value="EF-Tu/eEF-1alpha/eIF2-gamma C-terminal domain"/>
    <property type="match status" value="1"/>
</dbReference>
<dbReference type="SUPFAM" id="SSF52540">
    <property type="entry name" value="P-loop containing nucleoside triphosphate hydrolases"/>
    <property type="match status" value="1"/>
</dbReference>
<dbReference type="SUPFAM" id="SSF50447">
    <property type="entry name" value="Translation proteins"/>
    <property type="match status" value="1"/>
</dbReference>
<dbReference type="PROSITE" id="PS00301">
    <property type="entry name" value="G_TR_1"/>
    <property type="match status" value="1"/>
</dbReference>
<dbReference type="PROSITE" id="PS51722">
    <property type="entry name" value="G_TR_2"/>
    <property type="match status" value="1"/>
</dbReference>
<feature type="chain" id="PRO_0000337492" description="Elongation factor Tu 1">
    <location>
        <begin position="1"/>
        <end position="396"/>
    </location>
</feature>
<feature type="domain" description="tr-type G">
    <location>
        <begin position="10"/>
        <end position="206"/>
    </location>
</feature>
<feature type="region of interest" description="G1" evidence="1">
    <location>
        <begin position="19"/>
        <end position="26"/>
    </location>
</feature>
<feature type="region of interest" description="G2" evidence="1">
    <location>
        <begin position="60"/>
        <end position="64"/>
    </location>
</feature>
<feature type="region of interest" description="G3" evidence="1">
    <location>
        <begin position="81"/>
        <end position="84"/>
    </location>
</feature>
<feature type="region of interest" description="G4" evidence="1">
    <location>
        <begin position="136"/>
        <end position="139"/>
    </location>
</feature>
<feature type="region of interest" description="G5" evidence="1">
    <location>
        <begin position="174"/>
        <end position="176"/>
    </location>
</feature>
<feature type="binding site" evidence="2">
    <location>
        <begin position="19"/>
        <end position="26"/>
    </location>
    <ligand>
        <name>GTP</name>
        <dbReference type="ChEBI" id="CHEBI:37565"/>
    </ligand>
</feature>
<feature type="binding site" evidence="2">
    <location>
        <position position="26"/>
    </location>
    <ligand>
        <name>Mg(2+)</name>
        <dbReference type="ChEBI" id="CHEBI:18420"/>
    </ligand>
</feature>
<feature type="binding site" evidence="2">
    <location>
        <begin position="81"/>
        <end position="85"/>
    </location>
    <ligand>
        <name>GTP</name>
        <dbReference type="ChEBI" id="CHEBI:37565"/>
    </ligand>
</feature>
<feature type="binding site" evidence="2">
    <location>
        <begin position="136"/>
        <end position="139"/>
    </location>
    <ligand>
        <name>GTP</name>
        <dbReference type="ChEBI" id="CHEBI:37565"/>
    </ligand>
</feature>
<organism>
    <name type="scientific">Albidiferax ferrireducens (strain ATCC BAA-621 / DSM 15236 / T118)</name>
    <name type="common">Rhodoferax ferrireducens</name>
    <dbReference type="NCBI Taxonomy" id="338969"/>
    <lineage>
        <taxon>Bacteria</taxon>
        <taxon>Pseudomonadati</taxon>
        <taxon>Pseudomonadota</taxon>
        <taxon>Betaproteobacteria</taxon>
        <taxon>Burkholderiales</taxon>
        <taxon>Comamonadaceae</taxon>
        <taxon>Rhodoferax</taxon>
    </lineage>
</organism>
<sequence length="396" mass="42991">MGKEKFSRSKPHVNVGTIGHVDHGKTTLTAAITSVLAAKFGGTAKAYDQIDAAPEEKARGITINTAHVEYETANRHYAHVDCPGHADYVKNMITGAAQMDGAILVVSAADGPMPQTREHILLARQVGVPYIIVFLNKCDMVDDAELLELVEMEVRELLDKYEFPGDTTPIIHGSAKLAMEGDKGPMGEQAIMKLADALDSYIPLPERAIDGAFLMPVEDVFSISGRGTVVTGRVERGIIKVGEEIEIVGIHDTQKTTCTGVEMFRKLLDQGQAGDNVGILLRGTKREDVQRGQVLCKPGSIKPHTHFTGEIYVLSKDEGGRHTPFFNNYRPQFYFRTTDVTGAIELPEGKEMVMPGDNVSIIVKLINPIAMEEGLRFAIREGGKTVGAGVVAKIIA</sequence>
<keyword id="KW-0963">Cytoplasm</keyword>
<keyword id="KW-0251">Elongation factor</keyword>
<keyword id="KW-0342">GTP-binding</keyword>
<keyword id="KW-0378">Hydrolase</keyword>
<keyword id="KW-0460">Magnesium</keyword>
<keyword id="KW-0479">Metal-binding</keyword>
<keyword id="KW-0547">Nucleotide-binding</keyword>
<keyword id="KW-0648">Protein biosynthesis</keyword>
<keyword id="KW-1185">Reference proteome</keyword>
<gene>
    <name evidence="2" type="primary">tuf1</name>
    <name type="ordered locus">Rfer_3599</name>
</gene>
<evidence type="ECO:0000250" key="1"/>
<evidence type="ECO:0000255" key="2">
    <source>
        <dbReference type="HAMAP-Rule" id="MF_00118"/>
    </source>
</evidence>
<protein>
    <recommendedName>
        <fullName evidence="2">Elongation factor Tu 1</fullName>
        <shortName evidence="2">EF-Tu 1</shortName>
        <ecNumber evidence="2">3.6.5.3</ecNumber>
    </recommendedName>
</protein>
<proteinExistence type="inferred from homology"/>
<comment type="function">
    <text evidence="2">GTP hydrolase that promotes the GTP-dependent binding of aminoacyl-tRNA to the A-site of ribosomes during protein biosynthesis.</text>
</comment>
<comment type="catalytic activity">
    <reaction evidence="2">
        <text>GTP + H2O = GDP + phosphate + H(+)</text>
        <dbReference type="Rhea" id="RHEA:19669"/>
        <dbReference type="ChEBI" id="CHEBI:15377"/>
        <dbReference type="ChEBI" id="CHEBI:15378"/>
        <dbReference type="ChEBI" id="CHEBI:37565"/>
        <dbReference type="ChEBI" id="CHEBI:43474"/>
        <dbReference type="ChEBI" id="CHEBI:58189"/>
        <dbReference type="EC" id="3.6.5.3"/>
    </reaction>
    <physiologicalReaction direction="left-to-right" evidence="2">
        <dbReference type="Rhea" id="RHEA:19670"/>
    </physiologicalReaction>
</comment>
<comment type="subunit">
    <text evidence="2">Monomer.</text>
</comment>
<comment type="subcellular location">
    <subcellularLocation>
        <location evidence="2">Cytoplasm</location>
    </subcellularLocation>
</comment>
<comment type="similarity">
    <text evidence="2">Belongs to the TRAFAC class translation factor GTPase superfamily. Classic translation factor GTPase family. EF-Tu/EF-1A subfamily.</text>
</comment>
<reference key="1">
    <citation type="submission" date="2006-02" db="EMBL/GenBank/DDBJ databases">
        <title>Complete sequence of chromosome of Rhodoferax ferrireducens DSM 15236.</title>
        <authorList>
            <person name="Copeland A."/>
            <person name="Lucas S."/>
            <person name="Lapidus A."/>
            <person name="Barry K."/>
            <person name="Detter J.C."/>
            <person name="Glavina del Rio T."/>
            <person name="Hammon N."/>
            <person name="Israni S."/>
            <person name="Pitluck S."/>
            <person name="Brettin T."/>
            <person name="Bruce D."/>
            <person name="Han C."/>
            <person name="Tapia R."/>
            <person name="Gilna P."/>
            <person name="Kiss H."/>
            <person name="Schmutz J."/>
            <person name="Larimer F."/>
            <person name="Land M."/>
            <person name="Kyrpides N."/>
            <person name="Ivanova N."/>
            <person name="Richardson P."/>
        </authorList>
    </citation>
    <scope>NUCLEOTIDE SEQUENCE [LARGE SCALE GENOMIC DNA]</scope>
    <source>
        <strain>ATCC BAA-621 / DSM 15236 / T118</strain>
    </source>
</reference>
<accession>Q21SF0</accession>